<protein>
    <recommendedName>
        <fullName evidence="1">Large ribosomal subunit protein bL36</fullName>
    </recommendedName>
    <alternativeName>
        <fullName evidence="2">50S ribosomal protein L36</fullName>
    </alternativeName>
</protein>
<evidence type="ECO:0000255" key="1">
    <source>
        <dbReference type="HAMAP-Rule" id="MF_00251"/>
    </source>
</evidence>
<evidence type="ECO:0000305" key="2"/>
<comment type="similarity">
    <text evidence="1">Belongs to the bacterial ribosomal protein bL36 family.</text>
</comment>
<gene>
    <name evidence="1" type="primary">rpmJ</name>
    <name type="ordered locus">Sputw3181_0177</name>
</gene>
<dbReference type="EMBL" id="CP000503">
    <property type="protein sequence ID" value="ABM23030.1"/>
    <property type="molecule type" value="Genomic_DNA"/>
</dbReference>
<dbReference type="RefSeq" id="WP_006083579.1">
    <property type="nucleotide sequence ID" value="NC_008750.1"/>
</dbReference>
<dbReference type="SMR" id="A1RED5"/>
<dbReference type="GeneID" id="94726207"/>
<dbReference type="KEGG" id="shw:Sputw3181_0177"/>
<dbReference type="HOGENOM" id="CLU_135723_6_2_6"/>
<dbReference type="Proteomes" id="UP000002597">
    <property type="component" value="Chromosome"/>
</dbReference>
<dbReference type="GO" id="GO:0005737">
    <property type="term" value="C:cytoplasm"/>
    <property type="evidence" value="ECO:0007669"/>
    <property type="project" value="UniProtKB-ARBA"/>
</dbReference>
<dbReference type="GO" id="GO:1990904">
    <property type="term" value="C:ribonucleoprotein complex"/>
    <property type="evidence" value="ECO:0007669"/>
    <property type="project" value="UniProtKB-KW"/>
</dbReference>
<dbReference type="GO" id="GO:0005840">
    <property type="term" value="C:ribosome"/>
    <property type="evidence" value="ECO:0007669"/>
    <property type="project" value="UniProtKB-KW"/>
</dbReference>
<dbReference type="GO" id="GO:0003735">
    <property type="term" value="F:structural constituent of ribosome"/>
    <property type="evidence" value="ECO:0007669"/>
    <property type="project" value="InterPro"/>
</dbReference>
<dbReference type="GO" id="GO:0006412">
    <property type="term" value="P:translation"/>
    <property type="evidence" value="ECO:0007669"/>
    <property type="project" value="UniProtKB-UniRule"/>
</dbReference>
<dbReference type="HAMAP" id="MF_00251">
    <property type="entry name" value="Ribosomal_bL36"/>
    <property type="match status" value="1"/>
</dbReference>
<dbReference type="InterPro" id="IPR000473">
    <property type="entry name" value="Ribosomal_bL36"/>
</dbReference>
<dbReference type="InterPro" id="IPR035977">
    <property type="entry name" value="Ribosomal_bL36_sp"/>
</dbReference>
<dbReference type="NCBIfam" id="TIGR01022">
    <property type="entry name" value="rpmJ_bact"/>
    <property type="match status" value="1"/>
</dbReference>
<dbReference type="PANTHER" id="PTHR42888">
    <property type="entry name" value="50S RIBOSOMAL PROTEIN L36, CHLOROPLASTIC"/>
    <property type="match status" value="1"/>
</dbReference>
<dbReference type="PANTHER" id="PTHR42888:SF1">
    <property type="entry name" value="LARGE RIBOSOMAL SUBUNIT PROTEIN BL36C"/>
    <property type="match status" value="1"/>
</dbReference>
<dbReference type="Pfam" id="PF00444">
    <property type="entry name" value="Ribosomal_L36"/>
    <property type="match status" value="1"/>
</dbReference>
<dbReference type="SUPFAM" id="SSF57840">
    <property type="entry name" value="Ribosomal protein L36"/>
    <property type="match status" value="1"/>
</dbReference>
<dbReference type="PROSITE" id="PS00828">
    <property type="entry name" value="RIBOSOMAL_L36"/>
    <property type="match status" value="1"/>
</dbReference>
<name>RL36_SHESW</name>
<organism>
    <name type="scientific">Shewanella sp. (strain W3-18-1)</name>
    <dbReference type="NCBI Taxonomy" id="351745"/>
    <lineage>
        <taxon>Bacteria</taxon>
        <taxon>Pseudomonadati</taxon>
        <taxon>Pseudomonadota</taxon>
        <taxon>Gammaproteobacteria</taxon>
        <taxon>Alteromonadales</taxon>
        <taxon>Shewanellaceae</taxon>
        <taxon>Shewanella</taxon>
    </lineage>
</organism>
<sequence>MKVRASVKKICRNCKIVKRSGVVRVICVEPKHKQRQG</sequence>
<feature type="chain" id="PRO_0000302295" description="Large ribosomal subunit protein bL36">
    <location>
        <begin position="1"/>
        <end position="37"/>
    </location>
</feature>
<proteinExistence type="inferred from homology"/>
<reference key="1">
    <citation type="submission" date="2006-12" db="EMBL/GenBank/DDBJ databases">
        <title>Complete sequence of Shewanella sp. W3-18-1.</title>
        <authorList>
            <consortium name="US DOE Joint Genome Institute"/>
            <person name="Copeland A."/>
            <person name="Lucas S."/>
            <person name="Lapidus A."/>
            <person name="Barry K."/>
            <person name="Detter J.C."/>
            <person name="Glavina del Rio T."/>
            <person name="Hammon N."/>
            <person name="Israni S."/>
            <person name="Dalin E."/>
            <person name="Tice H."/>
            <person name="Pitluck S."/>
            <person name="Chain P."/>
            <person name="Malfatti S."/>
            <person name="Shin M."/>
            <person name="Vergez L."/>
            <person name="Schmutz J."/>
            <person name="Larimer F."/>
            <person name="Land M."/>
            <person name="Hauser L."/>
            <person name="Kyrpides N."/>
            <person name="Lykidis A."/>
            <person name="Tiedje J."/>
            <person name="Richardson P."/>
        </authorList>
    </citation>
    <scope>NUCLEOTIDE SEQUENCE [LARGE SCALE GENOMIC DNA]</scope>
    <source>
        <strain>W3-18-1</strain>
    </source>
</reference>
<accession>A1RED5</accession>
<keyword id="KW-0687">Ribonucleoprotein</keyword>
<keyword id="KW-0689">Ribosomal protein</keyword>